<sequence length="298" mass="33922">MKTLQSTLLLLLLVPLIKPAPPTQQDSRIIYDYGTDNFEESIFSQDYEDKYLDGKNIKEKETVIIPNEKSLQLQKDEAITPLPPKKENDEMPTCLLCVCLSGSVYCEEVDIDAVPPLPKESAYLYARFNKIKKLTAKDFADIPNLRRLDFTGNLIEDIEDGTFSKLSLLEELSLAENQLLKLPVLPPKLTLFNAKYNKIKSRGIKANAFKKLNNLTFLYLDHNALESVPLNLPESLRVIHLQFNNIASITDDTFCKANDTSYIRDRIEEIRLEGNPIVLGKHPNSFICLKRLPIGSYF</sequence>
<organism>
    <name type="scientific">Homo sapiens</name>
    <name type="common">Human</name>
    <dbReference type="NCBI Taxonomy" id="9606"/>
    <lineage>
        <taxon>Eukaryota</taxon>
        <taxon>Metazoa</taxon>
        <taxon>Chordata</taxon>
        <taxon>Craniata</taxon>
        <taxon>Vertebrata</taxon>
        <taxon>Euteleostomi</taxon>
        <taxon>Mammalia</taxon>
        <taxon>Eutheria</taxon>
        <taxon>Euarchontoglires</taxon>
        <taxon>Primates</taxon>
        <taxon>Haplorrhini</taxon>
        <taxon>Catarrhini</taxon>
        <taxon>Hominidae</taxon>
        <taxon>Homo</taxon>
    </lineage>
</organism>
<name>MIME_HUMAN</name>
<comment type="function">
    <text evidence="1">Induces bone formation in conjunction with TGF-beta-1 or TGF-beta-2.</text>
</comment>
<comment type="interaction">
    <interactant intactId="EBI-1753690">
        <id>P20774</id>
    </interactant>
    <interactant intactId="EBI-886">
        <id>P46108</id>
        <label>CRK</label>
    </interactant>
    <organismsDiffer>false</organismsDiffer>
    <experiments>2</experiments>
</comment>
<comment type="subcellular location">
    <subcellularLocation>
        <location evidence="2">Secreted</location>
        <location evidence="2">Extracellular space</location>
        <location evidence="2">Extracellular matrix</location>
    </subcellularLocation>
</comment>
<comment type="tissue specificity">
    <text>Bone.</text>
</comment>
<comment type="PTM">
    <text evidence="6">O-glycosylated with a core 1 or possibly core 8 glycan.</text>
</comment>
<comment type="PTM">
    <text evidence="1">Contains keratan sulfate.</text>
</comment>
<comment type="similarity">
    <text evidence="7">Belongs to the small leucine-rich proteoglycan (SLRP) family. SLRP class III subfamily.</text>
</comment>
<reference key="1">
    <citation type="journal article" date="1990" name="DNA Cell Biol.">
        <title>Molecular cloning of a novel bone-forming compound: osteoinductive factor.</title>
        <authorList>
            <person name="Madisen L."/>
            <person name="Neubauer M."/>
            <person name="Plowman G."/>
            <person name="Rosen D.M."/>
            <person name="Segarini P.R."/>
            <person name="Dasch J.R."/>
            <person name="Thompson A.Y."/>
            <person name="Ziman J."/>
            <person name="Bentz H."/>
            <person name="Purchio A.F."/>
        </authorList>
    </citation>
    <scope>NUCLEOTIDE SEQUENCE [MRNA]</scope>
</reference>
<reference key="2">
    <citation type="submission" date="1999-10" db="EMBL/GenBank/DDBJ databases">
        <authorList>
            <person name="Grover J."/>
            <person name="Rodriguez E."/>
            <person name="Roughley P.J."/>
        </authorList>
    </citation>
    <scope>NUCLEOTIDE SEQUENCE [GENOMIC DNA]</scope>
</reference>
<reference key="3">
    <citation type="journal article" date="2000" name="Nat. Genet.">
        <title>Mutations in KERA, encoding keratocan, cause cornea plana.</title>
        <authorList>
            <person name="Pellegata N.S."/>
            <person name="Dieguez-Lucena J.L."/>
            <person name="Joensuu T."/>
            <person name="Lau S."/>
            <person name="Montgomery K.T."/>
            <person name="Krahe R."/>
            <person name="Kivelae T."/>
            <person name="Kucherlapati R."/>
            <person name="Forsius H."/>
            <person name="de la Chapelle A."/>
        </authorList>
    </citation>
    <scope>NUCLEOTIDE SEQUENCE [MRNA]</scope>
</reference>
<reference key="4">
    <citation type="journal article" date="2000" name="Proc. Natl. Acad. Sci. U.S.A.">
        <title>Gene expression profiling in the human hypothalamus-pituitary-adrenal axis and full-length cDNA cloning.</title>
        <authorList>
            <person name="Hu R.-M."/>
            <person name="Han Z.-G."/>
            <person name="Song H.-D."/>
            <person name="Peng Y.-D."/>
            <person name="Huang Q.-H."/>
            <person name="Ren S.-X."/>
            <person name="Gu Y.-J."/>
            <person name="Huang C.-H."/>
            <person name="Li Y.-B."/>
            <person name="Jiang C.-L."/>
            <person name="Fu G."/>
            <person name="Zhang Q.-H."/>
            <person name="Gu B.-W."/>
            <person name="Dai M."/>
            <person name="Mao Y.-F."/>
            <person name="Gao G.-F."/>
            <person name="Rong R."/>
            <person name="Ye M."/>
            <person name="Zhou J."/>
            <person name="Xu S.-H."/>
            <person name="Gu J."/>
            <person name="Shi J.-X."/>
            <person name="Jin W.-R."/>
            <person name="Zhang C.-K."/>
            <person name="Wu T.-M."/>
            <person name="Huang G.-Y."/>
            <person name="Chen Z."/>
            <person name="Chen M.-D."/>
            <person name="Chen J.-L."/>
        </authorList>
    </citation>
    <scope>NUCLEOTIDE SEQUENCE [LARGE SCALE MRNA]</scope>
    <source>
        <tissue>Pituitary</tissue>
    </source>
</reference>
<reference key="5">
    <citation type="journal article" date="2001" name="Genome Res.">
        <title>Towards a catalog of human genes and proteins: sequencing and analysis of 500 novel complete protein coding human cDNAs.</title>
        <authorList>
            <person name="Wiemann S."/>
            <person name="Weil B."/>
            <person name="Wellenreuther R."/>
            <person name="Gassenhuber J."/>
            <person name="Glassl S."/>
            <person name="Ansorge W."/>
            <person name="Boecher M."/>
            <person name="Bloecker H."/>
            <person name="Bauersachs S."/>
            <person name="Blum H."/>
            <person name="Lauber J."/>
            <person name="Duesterhoeft A."/>
            <person name="Beyer A."/>
            <person name="Koehrer K."/>
            <person name="Strack N."/>
            <person name="Mewes H.-W."/>
            <person name="Ottenwaelder B."/>
            <person name="Obermaier B."/>
            <person name="Tampe J."/>
            <person name="Heubner D."/>
            <person name="Wambutt R."/>
            <person name="Korn B."/>
            <person name="Klein M."/>
            <person name="Poustka A."/>
        </authorList>
    </citation>
    <scope>NUCLEOTIDE SEQUENCE [LARGE SCALE MRNA]</scope>
    <source>
        <tissue>Uterus</tissue>
    </source>
</reference>
<reference key="6">
    <citation type="submission" date="2004-06" db="EMBL/GenBank/DDBJ databases">
        <title>Cloning of human full open reading frames in Gateway(TM) system entry vector (pDONR201).</title>
        <authorList>
            <person name="Ebert L."/>
            <person name="Schick M."/>
            <person name="Neubert P."/>
            <person name="Schatten R."/>
            <person name="Henze S."/>
            <person name="Korn B."/>
        </authorList>
    </citation>
    <scope>NUCLEOTIDE SEQUENCE [LARGE SCALE MRNA]</scope>
</reference>
<reference key="7">
    <citation type="journal article" date="2004" name="Nature">
        <title>DNA sequence and analysis of human chromosome 9.</title>
        <authorList>
            <person name="Humphray S.J."/>
            <person name="Oliver K."/>
            <person name="Hunt A.R."/>
            <person name="Plumb R.W."/>
            <person name="Loveland J.E."/>
            <person name="Howe K.L."/>
            <person name="Andrews T.D."/>
            <person name="Searle S."/>
            <person name="Hunt S.E."/>
            <person name="Scott C.E."/>
            <person name="Jones M.C."/>
            <person name="Ainscough R."/>
            <person name="Almeida J.P."/>
            <person name="Ambrose K.D."/>
            <person name="Ashwell R.I.S."/>
            <person name="Babbage A.K."/>
            <person name="Babbage S."/>
            <person name="Bagguley C.L."/>
            <person name="Bailey J."/>
            <person name="Banerjee R."/>
            <person name="Barker D.J."/>
            <person name="Barlow K.F."/>
            <person name="Bates K."/>
            <person name="Beasley H."/>
            <person name="Beasley O."/>
            <person name="Bird C.P."/>
            <person name="Bray-Allen S."/>
            <person name="Brown A.J."/>
            <person name="Brown J.Y."/>
            <person name="Burford D."/>
            <person name="Burrill W."/>
            <person name="Burton J."/>
            <person name="Carder C."/>
            <person name="Carter N.P."/>
            <person name="Chapman J.C."/>
            <person name="Chen Y."/>
            <person name="Clarke G."/>
            <person name="Clark S.Y."/>
            <person name="Clee C.M."/>
            <person name="Clegg S."/>
            <person name="Collier R.E."/>
            <person name="Corby N."/>
            <person name="Crosier M."/>
            <person name="Cummings A.T."/>
            <person name="Davies J."/>
            <person name="Dhami P."/>
            <person name="Dunn M."/>
            <person name="Dutta I."/>
            <person name="Dyer L.W."/>
            <person name="Earthrowl M.E."/>
            <person name="Faulkner L."/>
            <person name="Fleming C.J."/>
            <person name="Frankish A."/>
            <person name="Frankland J.A."/>
            <person name="French L."/>
            <person name="Fricker D.G."/>
            <person name="Garner P."/>
            <person name="Garnett J."/>
            <person name="Ghori J."/>
            <person name="Gilbert J.G.R."/>
            <person name="Glison C."/>
            <person name="Grafham D.V."/>
            <person name="Gribble S."/>
            <person name="Griffiths C."/>
            <person name="Griffiths-Jones S."/>
            <person name="Grocock R."/>
            <person name="Guy J."/>
            <person name="Hall R.E."/>
            <person name="Hammond S."/>
            <person name="Harley J.L."/>
            <person name="Harrison E.S.I."/>
            <person name="Hart E.A."/>
            <person name="Heath P.D."/>
            <person name="Henderson C.D."/>
            <person name="Hopkins B.L."/>
            <person name="Howard P.J."/>
            <person name="Howden P.J."/>
            <person name="Huckle E."/>
            <person name="Johnson C."/>
            <person name="Johnson D."/>
            <person name="Joy A.A."/>
            <person name="Kay M."/>
            <person name="Keenan S."/>
            <person name="Kershaw J.K."/>
            <person name="Kimberley A.M."/>
            <person name="King A."/>
            <person name="Knights A."/>
            <person name="Laird G.K."/>
            <person name="Langford C."/>
            <person name="Lawlor S."/>
            <person name="Leongamornlert D.A."/>
            <person name="Leversha M."/>
            <person name="Lloyd C."/>
            <person name="Lloyd D.M."/>
            <person name="Lovell J."/>
            <person name="Martin S."/>
            <person name="Mashreghi-Mohammadi M."/>
            <person name="Matthews L."/>
            <person name="McLaren S."/>
            <person name="McLay K.E."/>
            <person name="McMurray A."/>
            <person name="Milne S."/>
            <person name="Nickerson T."/>
            <person name="Nisbett J."/>
            <person name="Nordsiek G."/>
            <person name="Pearce A.V."/>
            <person name="Peck A.I."/>
            <person name="Porter K.M."/>
            <person name="Pandian R."/>
            <person name="Pelan S."/>
            <person name="Phillimore B."/>
            <person name="Povey S."/>
            <person name="Ramsey Y."/>
            <person name="Rand V."/>
            <person name="Scharfe M."/>
            <person name="Sehra H.K."/>
            <person name="Shownkeen R."/>
            <person name="Sims S.K."/>
            <person name="Skuce C.D."/>
            <person name="Smith M."/>
            <person name="Steward C.A."/>
            <person name="Swarbreck D."/>
            <person name="Sycamore N."/>
            <person name="Tester J."/>
            <person name="Thorpe A."/>
            <person name="Tracey A."/>
            <person name="Tromans A."/>
            <person name="Thomas D.W."/>
            <person name="Wall M."/>
            <person name="Wallis J.M."/>
            <person name="West A.P."/>
            <person name="Whitehead S.L."/>
            <person name="Willey D.L."/>
            <person name="Williams S.A."/>
            <person name="Wilming L."/>
            <person name="Wray P.W."/>
            <person name="Young L."/>
            <person name="Ashurst J.L."/>
            <person name="Coulson A."/>
            <person name="Blocker H."/>
            <person name="Durbin R.M."/>
            <person name="Sulston J.E."/>
            <person name="Hubbard T."/>
            <person name="Jackson M.J."/>
            <person name="Bentley D.R."/>
            <person name="Beck S."/>
            <person name="Rogers J."/>
            <person name="Dunham I."/>
        </authorList>
    </citation>
    <scope>NUCLEOTIDE SEQUENCE [LARGE SCALE GENOMIC DNA]</scope>
</reference>
<reference key="8">
    <citation type="journal article" date="2004" name="Genome Res.">
        <title>The status, quality, and expansion of the NIH full-length cDNA project: the Mammalian Gene Collection (MGC).</title>
        <authorList>
            <consortium name="The MGC Project Team"/>
        </authorList>
    </citation>
    <scope>NUCLEOTIDE SEQUENCE [LARGE SCALE MRNA]</scope>
    <source>
        <tissue>Testis</tissue>
    </source>
</reference>
<reference key="9">
    <citation type="journal article" date="1999" name="J. Biol. Chem.">
        <title>The bovine mimecan gene. Molecular cloning and characterization of two major RNA transcripts generated by alternative use of two splice acceptor sites in the third exon.</title>
        <authorList>
            <person name="Tasheva E.S."/>
            <person name="Funderburgh M.L."/>
            <person name="McReynolds J."/>
            <person name="Funderburgh J.L."/>
            <person name="Conrad G.W."/>
        </authorList>
    </citation>
    <scope>NUCLEOTIDE SEQUENCE [GENOMIC DNA] OF 1-54</scope>
</reference>
<reference key="10">
    <citation type="journal article" date="2004" name="Protein Sci.">
        <title>Signal peptide prediction based on analysis of experimentally verified cleavage sites.</title>
        <authorList>
            <person name="Zhang Z."/>
            <person name="Henzel W.J."/>
        </authorList>
    </citation>
    <scope>PROTEIN SEQUENCE OF 21-35</scope>
</reference>
<reference key="11">
    <citation type="journal article" date="2007" name="BMC Genomics">
        <title>The full-ORF clone resource of the German cDNA consortium.</title>
        <authorList>
            <person name="Bechtel S."/>
            <person name="Rosenfelder H."/>
            <person name="Duda A."/>
            <person name="Schmidt C.P."/>
            <person name="Ernst U."/>
            <person name="Wellenreuther R."/>
            <person name="Mehrle A."/>
            <person name="Schuster C."/>
            <person name="Bahr A."/>
            <person name="Bloecker H."/>
            <person name="Heubner D."/>
            <person name="Hoerlein A."/>
            <person name="Michel G."/>
            <person name="Wedler H."/>
            <person name="Koehrer K."/>
            <person name="Ottenwaelder B."/>
            <person name="Poustka A."/>
            <person name="Wiemann S."/>
            <person name="Schupp I."/>
        </authorList>
    </citation>
    <scope>NUCLEOTIDE SEQUENCE [LARGE SCALE MRNA] OF 156-298</scope>
    <source>
        <tissue>Uterus</tissue>
    </source>
</reference>
<reference key="12">
    <citation type="journal article" date="2009" name="J. Proteome Res.">
        <title>Glycoproteomics analysis of human liver tissue by combination of multiple enzyme digestion and hydrazide chemistry.</title>
        <authorList>
            <person name="Chen R."/>
            <person name="Jiang X."/>
            <person name="Sun D."/>
            <person name="Han G."/>
            <person name="Wang F."/>
            <person name="Ye M."/>
            <person name="Wang L."/>
            <person name="Zou H."/>
        </authorList>
    </citation>
    <scope>GLYCOSYLATION [LARGE SCALE ANALYSIS] AT ASN-258</scope>
    <source>
        <tissue>Liver</tissue>
    </source>
</reference>
<reference key="13">
    <citation type="journal article" date="2009" name="Nat. Methods">
        <title>Enrichment of glycopeptides for glycan structure and attachment site identification.</title>
        <authorList>
            <person name="Nilsson J."/>
            <person name="Rueetschi U."/>
            <person name="Halim A."/>
            <person name="Hesse C."/>
            <person name="Carlsohn E."/>
            <person name="Brinkmalm G."/>
            <person name="Larson G."/>
        </authorList>
    </citation>
    <scope>GLYCOSYLATION [LARGE SCALE ANALYSIS] AT THR-80</scope>
    <scope>STRUCTURE OF CARBOHYDRATES</scope>
    <source>
        <tissue>Cerebrospinal fluid</tissue>
    </source>
</reference>
<reference key="14">
    <citation type="journal article" date="2014" name="J. Proteomics">
        <title>An enzyme assisted RP-RPLC approach for in-depth analysis of human liver phosphoproteome.</title>
        <authorList>
            <person name="Bian Y."/>
            <person name="Song C."/>
            <person name="Cheng K."/>
            <person name="Dong M."/>
            <person name="Wang F."/>
            <person name="Huang J."/>
            <person name="Sun D."/>
            <person name="Wang L."/>
            <person name="Ye M."/>
            <person name="Zou H."/>
        </authorList>
    </citation>
    <scope>IDENTIFICATION BY MASS SPECTROMETRY [LARGE SCALE ANALYSIS]</scope>
    <source>
        <tissue>Liver</tissue>
    </source>
</reference>
<dbReference type="EMBL" id="AF192483">
    <property type="protein sequence ID" value="AAF19364.1"/>
    <property type="molecule type" value="Genomic_DNA"/>
</dbReference>
<dbReference type="EMBL" id="AF192478">
    <property type="protein sequence ID" value="AAF19364.1"/>
    <property type="status" value="JOINED"/>
    <property type="molecule type" value="Genomic_DNA"/>
</dbReference>
<dbReference type="EMBL" id="AF192479">
    <property type="protein sequence ID" value="AAF19364.1"/>
    <property type="status" value="JOINED"/>
    <property type="molecule type" value="Genomic_DNA"/>
</dbReference>
<dbReference type="EMBL" id="AF192480">
    <property type="protein sequence ID" value="AAF19364.1"/>
    <property type="status" value="JOINED"/>
    <property type="molecule type" value="Genomic_DNA"/>
</dbReference>
<dbReference type="EMBL" id="AF192481">
    <property type="protein sequence ID" value="AAF19364.1"/>
    <property type="status" value="JOINED"/>
    <property type="molecule type" value="Genomic_DNA"/>
</dbReference>
<dbReference type="EMBL" id="AF192482">
    <property type="protein sequence ID" value="AAF19364.1"/>
    <property type="status" value="JOINED"/>
    <property type="molecule type" value="Genomic_DNA"/>
</dbReference>
<dbReference type="EMBL" id="AF202167">
    <property type="protein sequence ID" value="AAF69109.1"/>
    <property type="molecule type" value="mRNA"/>
</dbReference>
<dbReference type="EMBL" id="AF100758">
    <property type="protein sequence ID" value="AAD43022.1"/>
    <property type="molecule type" value="mRNA"/>
</dbReference>
<dbReference type="EMBL" id="AL110267">
    <property type="protein sequence ID" value="CAB53706.1"/>
    <property type="molecule type" value="mRNA"/>
</dbReference>
<dbReference type="EMBL" id="CR533516">
    <property type="protein sequence ID" value="CAG38547.1"/>
    <property type="molecule type" value="mRNA"/>
</dbReference>
<dbReference type="EMBL" id="AL137848">
    <property type="status" value="NOT_ANNOTATED_CDS"/>
    <property type="molecule type" value="Genomic_DNA"/>
</dbReference>
<dbReference type="EMBL" id="BC037273">
    <property type="protein sequence ID" value="AAH37273.1"/>
    <property type="molecule type" value="mRNA"/>
</dbReference>
<dbReference type="EMBL" id="BC095443">
    <property type="protein sequence ID" value="AAH95443.1"/>
    <property type="molecule type" value="mRNA"/>
</dbReference>
<dbReference type="EMBL" id="AF112465">
    <property type="protein sequence ID" value="AAD40453.1"/>
    <property type="molecule type" value="Genomic_DNA"/>
</dbReference>
<dbReference type="EMBL" id="AL133114">
    <property type="protein sequence ID" value="CAB61417.2"/>
    <property type="molecule type" value="mRNA"/>
</dbReference>
<dbReference type="CCDS" id="CCDS6695.1"/>
<dbReference type="PIR" id="B35272">
    <property type="entry name" value="B35272"/>
</dbReference>
<dbReference type="RefSeq" id="NP_054776.1">
    <property type="nucleotide sequence ID" value="NM_014057.5"/>
</dbReference>
<dbReference type="RefSeq" id="NP_077727.3">
    <property type="nucleotide sequence ID" value="NM_024416.4"/>
</dbReference>
<dbReference type="RefSeq" id="NP_148935.1">
    <property type="nucleotide sequence ID" value="NM_033014.4"/>
</dbReference>
<dbReference type="SMR" id="P20774"/>
<dbReference type="BioGRID" id="111019">
    <property type="interactions" value="14"/>
</dbReference>
<dbReference type="FunCoup" id="P20774">
    <property type="interactions" value="263"/>
</dbReference>
<dbReference type="IntAct" id="P20774">
    <property type="interactions" value="12"/>
</dbReference>
<dbReference type="STRING" id="9606.ENSP00000364711"/>
<dbReference type="GlyConnect" id="767">
    <property type="glycosylation" value="13 N-Linked glycans (1 site), 1 O-Linked glycan (1 site)"/>
</dbReference>
<dbReference type="GlyCosmos" id="P20774">
    <property type="glycosylation" value="3 sites, 14 glycans"/>
</dbReference>
<dbReference type="GlyGen" id="P20774">
    <property type="glycosylation" value="4 sites, 61 N-linked glycans (2 sites), 2 O-linked glycans (1 site)"/>
</dbReference>
<dbReference type="iPTMnet" id="P20774"/>
<dbReference type="PhosphoSitePlus" id="P20774"/>
<dbReference type="SwissPalm" id="P20774"/>
<dbReference type="BioMuta" id="OGN"/>
<dbReference type="DMDM" id="129078"/>
<dbReference type="REPRODUCTION-2DPAGE" id="IPI00025465"/>
<dbReference type="jPOST" id="P20774"/>
<dbReference type="MassIVE" id="P20774"/>
<dbReference type="PaxDb" id="9606-ENSP00000262551"/>
<dbReference type="PeptideAtlas" id="P20774"/>
<dbReference type="ProteomicsDB" id="53784"/>
<dbReference type="Antibodypedia" id="2122">
    <property type="antibodies" value="305 antibodies from 34 providers"/>
</dbReference>
<dbReference type="DNASU" id="4969"/>
<dbReference type="Ensembl" id="ENST00000262551.8">
    <property type="protein sequence ID" value="ENSP00000262551.4"/>
    <property type="gene ID" value="ENSG00000106809.11"/>
</dbReference>
<dbReference type="Ensembl" id="ENST00000375561.10">
    <property type="protein sequence ID" value="ENSP00000364711.5"/>
    <property type="gene ID" value="ENSG00000106809.11"/>
</dbReference>
<dbReference type="Ensembl" id="ENST00000707237.1">
    <property type="protein sequence ID" value="ENSP00000516801.1"/>
    <property type="gene ID" value="ENSG00000291350.1"/>
</dbReference>
<dbReference type="Ensembl" id="ENST00000707238.1">
    <property type="protein sequence ID" value="ENSP00000516802.1"/>
    <property type="gene ID" value="ENSG00000291350.1"/>
</dbReference>
<dbReference type="GeneID" id="4969"/>
<dbReference type="KEGG" id="hsa:4969"/>
<dbReference type="MANE-Select" id="ENST00000375561.10">
    <property type="protein sequence ID" value="ENSP00000364711.5"/>
    <property type="RefSeq nucleotide sequence ID" value="NM_014057.5"/>
    <property type="RefSeq protein sequence ID" value="NP_054776.1"/>
</dbReference>
<dbReference type="UCSC" id="uc004asa.4">
    <property type="organism name" value="human"/>
</dbReference>
<dbReference type="AGR" id="HGNC:8126"/>
<dbReference type="CTD" id="4969"/>
<dbReference type="DisGeNET" id="4969"/>
<dbReference type="GeneCards" id="OGN"/>
<dbReference type="HGNC" id="HGNC:8126">
    <property type="gene designation" value="OGN"/>
</dbReference>
<dbReference type="HPA" id="ENSG00000106809">
    <property type="expression patterns" value="Tissue enhanced (cervix, ovary)"/>
</dbReference>
<dbReference type="MIM" id="602383">
    <property type="type" value="gene"/>
</dbReference>
<dbReference type="neXtProt" id="NX_P20774"/>
<dbReference type="OpenTargets" id="ENSG00000106809"/>
<dbReference type="PharmGKB" id="PA31913"/>
<dbReference type="VEuPathDB" id="HostDB:ENSG00000106809"/>
<dbReference type="eggNOG" id="KOG0619">
    <property type="taxonomic scope" value="Eukaryota"/>
</dbReference>
<dbReference type="GeneTree" id="ENSGT00940000157238"/>
<dbReference type="HOGENOM" id="CLU_067583_1_0_1"/>
<dbReference type="InParanoid" id="P20774"/>
<dbReference type="OMA" id="RIIHLQF"/>
<dbReference type="OrthoDB" id="7451790at2759"/>
<dbReference type="PAN-GO" id="P20774">
    <property type="GO annotations" value="3 GO annotations based on evolutionary models"/>
</dbReference>
<dbReference type="PhylomeDB" id="P20774"/>
<dbReference type="TreeFam" id="TF351924"/>
<dbReference type="PathwayCommons" id="P20774"/>
<dbReference type="Reactome" id="R-HSA-2022854">
    <property type="pathway name" value="Keratan sulfate biosynthesis"/>
</dbReference>
<dbReference type="Reactome" id="R-HSA-2022857">
    <property type="pathway name" value="Keratan sulfate degradation"/>
</dbReference>
<dbReference type="Reactome" id="R-HSA-3656225">
    <property type="pathway name" value="Defective CHST6 causes MCDC1"/>
</dbReference>
<dbReference type="Reactome" id="R-HSA-3656243">
    <property type="pathway name" value="Defective ST3GAL3 causes MCT12 and EIEE15"/>
</dbReference>
<dbReference type="Reactome" id="R-HSA-3656244">
    <property type="pathway name" value="Defective B4GALT1 causes B4GALT1-CDG (CDG-2d)"/>
</dbReference>
<dbReference type="SignaLink" id="P20774"/>
<dbReference type="BioGRID-ORCS" id="4969">
    <property type="hits" value="10 hits in 1140 CRISPR screens"/>
</dbReference>
<dbReference type="CD-CODE" id="DEE660B4">
    <property type="entry name" value="Stress granule"/>
</dbReference>
<dbReference type="ChiTaRS" id="OGN">
    <property type="organism name" value="human"/>
</dbReference>
<dbReference type="GeneWiki" id="OGN_(gene)"/>
<dbReference type="GenomeRNAi" id="4969"/>
<dbReference type="Pharos" id="P20774">
    <property type="development level" value="Tbio"/>
</dbReference>
<dbReference type="PRO" id="PR:P20774"/>
<dbReference type="Proteomes" id="UP000005640">
    <property type="component" value="Chromosome 9"/>
</dbReference>
<dbReference type="RNAct" id="P20774">
    <property type="molecule type" value="protein"/>
</dbReference>
<dbReference type="Bgee" id="ENSG00000106809">
    <property type="expression patterns" value="Expressed in right coronary artery and 176 other cell types or tissues"/>
</dbReference>
<dbReference type="ExpressionAtlas" id="P20774">
    <property type="expression patterns" value="baseline and differential"/>
</dbReference>
<dbReference type="GO" id="GO:0062023">
    <property type="term" value="C:collagen-containing extracellular matrix"/>
    <property type="evidence" value="ECO:0007005"/>
    <property type="project" value="BHF-UCL"/>
</dbReference>
<dbReference type="GO" id="GO:0070062">
    <property type="term" value="C:extracellular exosome"/>
    <property type="evidence" value="ECO:0007005"/>
    <property type="project" value="UniProtKB"/>
</dbReference>
<dbReference type="GO" id="GO:0031012">
    <property type="term" value="C:extracellular matrix"/>
    <property type="evidence" value="ECO:0000318"/>
    <property type="project" value="GO_Central"/>
</dbReference>
<dbReference type="GO" id="GO:0005576">
    <property type="term" value="C:extracellular region"/>
    <property type="evidence" value="ECO:0007005"/>
    <property type="project" value="BHF-UCL"/>
</dbReference>
<dbReference type="GO" id="GO:0005615">
    <property type="term" value="C:extracellular space"/>
    <property type="evidence" value="ECO:0007005"/>
    <property type="project" value="BHF-UCL"/>
</dbReference>
<dbReference type="GO" id="GO:1903561">
    <property type="term" value="C:extracellular vesicle"/>
    <property type="evidence" value="ECO:0007005"/>
    <property type="project" value="UniProtKB"/>
</dbReference>
<dbReference type="GO" id="GO:0005796">
    <property type="term" value="C:Golgi lumen"/>
    <property type="evidence" value="ECO:0000304"/>
    <property type="project" value="Reactome"/>
</dbReference>
<dbReference type="GO" id="GO:0043202">
    <property type="term" value="C:lysosomal lumen"/>
    <property type="evidence" value="ECO:0000304"/>
    <property type="project" value="Reactome"/>
</dbReference>
<dbReference type="GO" id="GO:0008083">
    <property type="term" value="F:growth factor activity"/>
    <property type="evidence" value="ECO:0007669"/>
    <property type="project" value="UniProtKB-KW"/>
</dbReference>
<dbReference type="GO" id="GO:0061975">
    <property type="term" value="P:articular cartilage development"/>
    <property type="evidence" value="ECO:0000318"/>
    <property type="project" value="GO_Central"/>
</dbReference>
<dbReference type="GO" id="GO:0060348">
    <property type="term" value="P:bone development"/>
    <property type="evidence" value="ECO:0000318"/>
    <property type="project" value="GO_Central"/>
</dbReference>
<dbReference type="GO" id="GO:0048662">
    <property type="term" value="P:negative regulation of smooth muscle cell proliferation"/>
    <property type="evidence" value="ECO:0000250"/>
    <property type="project" value="UniProtKB"/>
</dbReference>
<dbReference type="FunFam" id="3.80.10.10:FF:000335">
    <property type="entry name" value="mimecan"/>
    <property type="match status" value="1"/>
</dbReference>
<dbReference type="Gene3D" id="3.80.10.10">
    <property type="entry name" value="Ribonuclease Inhibitor"/>
    <property type="match status" value="1"/>
</dbReference>
<dbReference type="InterPro" id="IPR001611">
    <property type="entry name" value="Leu-rich_rpt"/>
</dbReference>
<dbReference type="InterPro" id="IPR003591">
    <property type="entry name" value="Leu-rich_rpt_typical-subtyp"/>
</dbReference>
<dbReference type="InterPro" id="IPR032675">
    <property type="entry name" value="LRR_dom_sf"/>
</dbReference>
<dbReference type="InterPro" id="IPR043547">
    <property type="entry name" value="Mimecan/Epiphycan/Opticin"/>
</dbReference>
<dbReference type="PANTHER" id="PTHR46269">
    <property type="entry name" value="EPIPHYCAN-RELATED"/>
    <property type="match status" value="1"/>
</dbReference>
<dbReference type="PANTHER" id="PTHR46269:SF1">
    <property type="entry name" value="MIMECAN"/>
    <property type="match status" value="1"/>
</dbReference>
<dbReference type="Pfam" id="PF13855">
    <property type="entry name" value="LRR_8"/>
    <property type="match status" value="1"/>
</dbReference>
<dbReference type="SMART" id="SM00369">
    <property type="entry name" value="LRR_TYP"/>
    <property type="match status" value="4"/>
</dbReference>
<dbReference type="SUPFAM" id="SSF52058">
    <property type="entry name" value="L domain-like"/>
    <property type="match status" value="1"/>
</dbReference>
<dbReference type="PROSITE" id="PS51450">
    <property type="entry name" value="LRR"/>
    <property type="match status" value="4"/>
</dbReference>
<feature type="signal peptide" evidence="4">
    <location>
        <begin position="1"/>
        <end position="20"/>
    </location>
</feature>
<feature type="chain" id="PRO_0000032760" description="Mimecan">
    <location>
        <begin position="21"/>
        <end position="298"/>
    </location>
</feature>
<feature type="repeat" description="LRR 1">
    <location>
        <begin position="112"/>
        <end position="131"/>
    </location>
</feature>
<feature type="repeat" description="LRR 2">
    <location>
        <begin position="132"/>
        <end position="155"/>
    </location>
</feature>
<feature type="repeat" description="LRR 3">
    <location>
        <begin position="156"/>
        <end position="179"/>
    </location>
</feature>
<feature type="repeat" description="LRR 4">
    <location>
        <begin position="180"/>
        <end position="199"/>
    </location>
</feature>
<feature type="repeat" description="LRR 5">
    <location>
        <begin position="200"/>
        <end position="225"/>
    </location>
</feature>
<feature type="repeat" description="LRR 6">
    <location>
        <begin position="226"/>
        <end position="246"/>
    </location>
</feature>
<feature type="repeat" description="LRR 7">
    <location>
        <begin position="247"/>
        <end position="277"/>
    </location>
</feature>
<feature type="glycosylation site" description="O-linked (GalNAc...) threonine" evidence="6">
    <location>
        <position position="80"/>
    </location>
</feature>
<feature type="glycosylation site" description="N-linked (GlcNAc...) (keratan sulfate) asparagine" evidence="3">
    <location>
        <position position="88"/>
    </location>
</feature>
<feature type="glycosylation site" description="N-linked (GlcNAc...) (keratan sulfate) asparagine" evidence="3">
    <location>
        <position position="214"/>
    </location>
</feature>
<feature type="glycosylation site" description="N-linked (GlcNAc...) (keratan sulfate) asparagine" evidence="5">
    <location>
        <position position="258"/>
    </location>
</feature>
<feature type="disulfide bond" evidence="1">
    <location>
        <begin position="255"/>
        <end position="288"/>
    </location>
</feature>
<protein>
    <recommendedName>
        <fullName>Mimecan</fullName>
    </recommendedName>
    <alternativeName>
        <fullName>Osteoglycin</fullName>
    </alternativeName>
    <alternativeName>
        <fullName>Osteoinductive factor</fullName>
        <shortName>OIF</shortName>
    </alternativeName>
</protein>
<accession>P20774</accession>
<accession>Q6FIB0</accession>
<accession>Q9UF90</accession>
<accession>Q9UNK5</accession>
<keyword id="KW-0903">Direct protein sequencing</keyword>
<keyword id="KW-1015">Disulfide bond</keyword>
<keyword id="KW-0272">Extracellular matrix</keyword>
<keyword id="KW-0325">Glycoprotein</keyword>
<keyword id="KW-0339">Growth factor</keyword>
<keyword id="KW-0433">Leucine-rich repeat</keyword>
<keyword id="KW-0654">Proteoglycan</keyword>
<keyword id="KW-1267">Proteomics identification</keyword>
<keyword id="KW-1185">Reference proteome</keyword>
<keyword id="KW-0677">Repeat</keyword>
<keyword id="KW-0964">Secreted</keyword>
<keyword id="KW-0732">Signal</keyword>
<evidence type="ECO:0000250" key="1">
    <source>
        <dbReference type="UniProtKB" id="P19879"/>
    </source>
</evidence>
<evidence type="ECO:0000250" key="2">
    <source>
        <dbReference type="UniProtKB" id="Q8MJF1"/>
    </source>
</evidence>
<evidence type="ECO:0000255" key="3"/>
<evidence type="ECO:0000269" key="4">
    <source>
    </source>
</evidence>
<evidence type="ECO:0000269" key="5">
    <source>
    </source>
</evidence>
<evidence type="ECO:0000269" key="6">
    <source>
    </source>
</evidence>
<evidence type="ECO:0000305" key="7"/>
<proteinExistence type="evidence at protein level"/>
<gene>
    <name type="primary">OGN</name>
    <name type="synonym">OIF</name>
    <name type="synonym">SLRR3A</name>
</gene>